<dbReference type="EC" id="2.7.11.1" evidence="1"/>
<dbReference type="EMBL" id="CP001407">
    <property type="protein sequence ID" value="ACO30142.1"/>
    <property type="molecule type" value="Genomic_DNA"/>
</dbReference>
<dbReference type="RefSeq" id="WP_000970576.1">
    <property type="nucleotide sequence ID" value="NZ_CP009318.1"/>
</dbReference>
<dbReference type="SMR" id="C1EZZ5"/>
<dbReference type="GeneID" id="72447786"/>
<dbReference type="KEGG" id="bcx:BCA_1028"/>
<dbReference type="PATRIC" id="fig|572264.18.peg.974"/>
<dbReference type="Proteomes" id="UP000002210">
    <property type="component" value="Chromosome"/>
</dbReference>
<dbReference type="GO" id="GO:0005524">
    <property type="term" value="F:ATP binding"/>
    <property type="evidence" value="ECO:0007669"/>
    <property type="project" value="UniProtKB-KW"/>
</dbReference>
<dbReference type="GO" id="GO:0106310">
    <property type="term" value="F:protein serine kinase activity"/>
    <property type="evidence" value="ECO:0007669"/>
    <property type="project" value="RHEA"/>
</dbReference>
<dbReference type="GO" id="GO:0004674">
    <property type="term" value="F:protein serine/threonine kinase activity"/>
    <property type="evidence" value="ECO:0007669"/>
    <property type="project" value="UniProtKB-KW"/>
</dbReference>
<dbReference type="GO" id="GO:0016989">
    <property type="term" value="F:sigma factor antagonist activity"/>
    <property type="evidence" value="ECO:0007669"/>
    <property type="project" value="InterPro"/>
</dbReference>
<dbReference type="CDD" id="cd16936">
    <property type="entry name" value="HATPase_RsbW-like"/>
    <property type="match status" value="1"/>
</dbReference>
<dbReference type="FunFam" id="3.30.565.10:FF:000026">
    <property type="entry name" value="Serine-protein kinase RsbW"/>
    <property type="match status" value="1"/>
</dbReference>
<dbReference type="Gene3D" id="3.30.565.10">
    <property type="entry name" value="Histidine kinase-like ATPase, C-terminal domain"/>
    <property type="match status" value="1"/>
</dbReference>
<dbReference type="HAMAP" id="MF_00638">
    <property type="entry name" value="Anti_sigma_B"/>
    <property type="match status" value="1"/>
</dbReference>
<dbReference type="InterPro" id="IPR050267">
    <property type="entry name" value="Anti-sigma-factor_SerPK"/>
</dbReference>
<dbReference type="InterPro" id="IPR036890">
    <property type="entry name" value="HATPase_C_sf"/>
</dbReference>
<dbReference type="InterPro" id="IPR010193">
    <property type="entry name" value="RsbW"/>
</dbReference>
<dbReference type="NCBIfam" id="NF003144">
    <property type="entry name" value="PRK04069.1"/>
    <property type="match status" value="1"/>
</dbReference>
<dbReference type="NCBIfam" id="TIGR01924">
    <property type="entry name" value="rsbW_low_gc"/>
    <property type="match status" value="1"/>
</dbReference>
<dbReference type="PANTHER" id="PTHR35526">
    <property type="entry name" value="ANTI-SIGMA-F FACTOR RSBW-RELATED"/>
    <property type="match status" value="1"/>
</dbReference>
<dbReference type="PANTHER" id="PTHR35526:SF9">
    <property type="entry name" value="SERINE-PROTEIN KINASE RSBW"/>
    <property type="match status" value="1"/>
</dbReference>
<dbReference type="Pfam" id="PF13581">
    <property type="entry name" value="HATPase_c_2"/>
    <property type="match status" value="1"/>
</dbReference>
<dbReference type="SUPFAM" id="SSF55874">
    <property type="entry name" value="ATPase domain of HSP90 chaperone/DNA topoisomerase II/histidine kinase"/>
    <property type="match status" value="1"/>
</dbReference>
<gene>
    <name evidence="1" type="primary">rsbW</name>
    <name type="ordered locus">BCA_1028</name>
</gene>
<sequence>MMERFEKIEMKIPAKAEYVAIIRLTMAGVANRMGFAYDDIEDMKIAISEACTNIVQHAYKEDVGEIAIVFGLYENRLEIMVADNGVSFDFNNLKRKVGPYDISKPVEHLPENGLGLYLINTLMDDIQIMHDEGMTVLMTKYIQREQVENDGNPISTYESY</sequence>
<feature type="chain" id="PRO_1000147386" description="Serine-protein kinase RsbW">
    <location>
        <begin position="1"/>
        <end position="160"/>
    </location>
</feature>
<organism>
    <name type="scientific">Bacillus cereus (strain 03BB102)</name>
    <dbReference type="NCBI Taxonomy" id="572264"/>
    <lineage>
        <taxon>Bacteria</taxon>
        <taxon>Bacillati</taxon>
        <taxon>Bacillota</taxon>
        <taxon>Bacilli</taxon>
        <taxon>Bacillales</taxon>
        <taxon>Bacillaceae</taxon>
        <taxon>Bacillus</taxon>
        <taxon>Bacillus cereus group</taxon>
    </lineage>
</organism>
<proteinExistence type="inferred from homology"/>
<keyword id="KW-0067">ATP-binding</keyword>
<keyword id="KW-0418">Kinase</keyword>
<keyword id="KW-0547">Nucleotide-binding</keyword>
<keyword id="KW-0723">Serine/threonine-protein kinase</keyword>
<keyword id="KW-0808">Transferase</keyword>
<name>RSBW_BACC3</name>
<evidence type="ECO:0000255" key="1">
    <source>
        <dbReference type="HAMAP-Rule" id="MF_00638"/>
    </source>
</evidence>
<protein>
    <recommendedName>
        <fullName evidence="1">Serine-protein kinase RsbW</fullName>
        <ecNumber evidence="1">2.7.11.1</ecNumber>
    </recommendedName>
    <alternativeName>
        <fullName evidence="1">Anti-sigma-B factor</fullName>
    </alternativeName>
    <alternativeName>
        <fullName evidence="1">Sigma-B negative effector RsbW</fullName>
    </alternativeName>
</protein>
<comment type="function">
    <text evidence="1">Negative regulator of sigma-B activity. Phosphorylates and inactivates its specific antagonist protein, RsbV. Upon phosphorylation of RsbV, RsbW is released and binds to sigma-B, thereby blocking its ability to form an RNA polymerase holoenzyme (E-sigma-B).</text>
</comment>
<comment type="catalytic activity">
    <reaction evidence="1">
        <text>L-seryl-[protein] + ATP = O-phospho-L-seryl-[protein] + ADP + H(+)</text>
        <dbReference type="Rhea" id="RHEA:17989"/>
        <dbReference type="Rhea" id="RHEA-COMP:9863"/>
        <dbReference type="Rhea" id="RHEA-COMP:11604"/>
        <dbReference type="ChEBI" id="CHEBI:15378"/>
        <dbReference type="ChEBI" id="CHEBI:29999"/>
        <dbReference type="ChEBI" id="CHEBI:30616"/>
        <dbReference type="ChEBI" id="CHEBI:83421"/>
        <dbReference type="ChEBI" id="CHEBI:456216"/>
        <dbReference type="EC" id="2.7.11.1"/>
    </reaction>
</comment>
<comment type="catalytic activity">
    <reaction evidence="1">
        <text>L-threonyl-[protein] + ATP = O-phospho-L-threonyl-[protein] + ADP + H(+)</text>
        <dbReference type="Rhea" id="RHEA:46608"/>
        <dbReference type="Rhea" id="RHEA-COMP:11060"/>
        <dbReference type="Rhea" id="RHEA-COMP:11605"/>
        <dbReference type="ChEBI" id="CHEBI:15378"/>
        <dbReference type="ChEBI" id="CHEBI:30013"/>
        <dbReference type="ChEBI" id="CHEBI:30616"/>
        <dbReference type="ChEBI" id="CHEBI:61977"/>
        <dbReference type="ChEBI" id="CHEBI:456216"/>
        <dbReference type="EC" id="2.7.11.1"/>
    </reaction>
</comment>
<comment type="similarity">
    <text evidence="1">Belongs to the anti-sigma-factor family.</text>
</comment>
<reference key="1">
    <citation type="submission" date="2009-02" db="EMBL/GenBank/DDBJ databases">
        <title>Genome sequence of Bacillus cereus 03BB102.</title>
        <authorList>
            <person name="Dodson R.J."/>
            <person name="Jackson P."/>
            <person name="Munk A.C."/>
            <person name="Brettin T."/>
            <person name="Bruce D."/>
            <person name="Detter C."/>
            <person name="Tapia R."/>
            <person name="Han C."/>
            <person name="Sutton G."/>
            <person name="Sims D."/>
        </authorList>
    </citation>
    <scope>NUCLEOTIDE SEQUENCE [LARGE SCALE GENOMIC DNA]</scope>
    <source>
        <strain>03BB102</strain>
    </source>
</reference>
<accession>C1EZZ5</accession>